<name>072L_FRG3G</name>
<proteinExistence type="predicted"/>
<organism>
    <name type="scientific">Frog virus 3 (isolate Goorha)</name>
    <name type="common">FV-3</name>
    <dbReference type="NCBI Taxonomy" id="654924"/>
    <lineage>
        <taxon>Viruses</taxon>
        <taxon>Varidnaviria</taxon>
        <taxon>Bamfordvirae</taxon>
        <taxon>Nucleocytoviricota</taxon>
        <taxon>Megaviricetes</taxon>
        <taxon>Pimascovirales</taxon>
        <taxon>Iridoviridae</taxon>
        <taxon>Alphairidovirinae</taxon>
        <taxon>Ranavirus</taxon>
        <taxon>Frog virus 3</taxon>
    </lineage>
</organism>
<accession>Q6GZQ3</accession>
<organismHost>
    <name type="scientific">Dryophytes versicolor</name>
    <name type="common">chameleon treefrog</name>
    <dbReference type="NCBI Taxonomy" id="30343"/>
</organismHost>
<organismHost>
    <name type="scientific">Lithobates pipiens</name>
    <name type="common">Northern leopard frog</name>
    <name type="synonym">Rana pipiens</name>
    <dbReference type="NCBI Taxonomy" id="8404"/>
</organismHost>
<organismHost>
    <name type="scientific">Lithobates sylvaticus</name>
    <name type="common">Wood frog</name>
    <name type="synonym">Rana sylvatica</name>
    <dbReference type="NCBI Taxonomy" id="45438"/>
</organismHost>
<organismHost>
    <name type="scientific">Notophthalmus viridescens</name>
    <name type="common">Eastern newt</name>
    <name type="synonym">Triturus viridescens</name>
    <dbReference type="NCBI Taxonomy" id="8316"/>
</organismHost>
<sequence>MSLRTSGHPGALVAAHCRVHKPASIYPLETGSLNGPDPEAVSHRGHATAARVHPRVVDPLAVSRKEDQPVPAFGQGPSDVEASHGHPSLFRVPVGRIQSLYPVPHLGQCRARSPHDVSHPVHRQHVGHVPHSLDYPVCPRDPQGREDVSTDDGNLFRDSFYRHIFARVRNVRDVEPADLNLIPEFPVASLAATGNSPLVTSLRPDVSGIFWPIWTPRRPRRGGQCLASTSPEGRSLRM</sequence>
<keyword id="KW-1185">Reference proteome</keyword>
<reference key="1">
    <citation type="journal article" date="2004" name="Virology">
        <title>Comparative genomic analyses of frog virus 3, type species of the genus Ranavirus (family Iridoviridae).</title>
        <authorList>
            <person name="Tan W.G."/>
            <person name="Barkman T.J."/>
            <person name="Gregory Chinchar V."/>
            <person name="Essani K."/>
        </authorList>
    </citation>
    <scope>NUCLEOTIDE SEQUENCE [LARGE SCALE GENOMIC DNA]</scope>
</reference>
<dbReference type="EMBL" id="AY548484">
    <property type="protein sequence ID" value="AAT09732.1"/>
    <property type="molecule type" value="Genomic_DNA"/>
</dbReference>
<dbReference type="RefSeq" id="YP_031651.1">
    <property type="nucleotide sequence ID" value="NC_005946.1"/>
</dbReference>
<dbReference type="KEGG" id="vg:2947772"/>
<dbReference type="Proteomes" id="UP000008770">
    <property type="component" value="Segment"/>
</dbReference>
<protein>
    <recommendedName>
        <fullName>Uncharacterized protein 072L</fullName>
    </recommendedName>
</protein>
<gene>
    <name type="ORF">FV3-072L</name>
</gene>
<feature type="chain" id="PRO_0000410554" description="Uncharacterized protein 072L">
    <location>
        <begin position="1"/>
        <end position="238"/>
    </location>
</feature>